<keyword id="KW-1185">Reference proteome</keyword>
<keyword id="KW-0687">Ribonucleoprotein</keyword>
<keyword id="KW-0689">Ribosomal protein</keyword>
<keyword id="KW-0694">RNA-binding</keyword>
<keyword id="KW-0699">rRNA-binding</keyword>
<proteinExistence type="inferred from homology"/>
<gene>
    <name evidence="1" type="primary">rpsO</name>
    <name type="ordered locus">Tgr7_1006</name>
</gene>
<feature type="chain" id="PRO_1000166446" description="Small ribosomal subunit protein uS15">
    <location>
        <begin position="1"/>
        <end position="89"/>
    </location>
</feature>
<feature type="region of interest" description="Disordered" evidence="2">
    <location>
        <begin position="1"/>
        <end position="24"/>
    </location>
</feature>
<feature type="compositionally biased region" description="Basic and acidic residues" evidence="2">
    <location>
        <begin position="11"/>
        <end position="20"/>
    </location>
</feature>
<evidence type="ECO:0000255" key="1">
    <source>
        <dbReference type="HAMAP-Rule" id="MF_01343"/>
    </source>
</evidence>
<evidence type="ECO:0000256" key="2">
    <source>
        <dbReference type="SAM" id="MobiDB-lite"/>
    </source>
</evidence>
<evidence type="ECO:0000305" key="3"/>
<dbReference type="EMBL" id="CP001339">
    <property type="protein sequence ID" value="ACL72094.1"/>
    <property type="molecule type" value="Genomic_DNA"/>
</dbReference>
<dbReference type="RefSeq" id="WP_012637578.1">
    <property type="nucleotide sequence ID" value="NC_011901.1"/>
</dbReference>
<dbReference type="SMR" id="B8GP05"/>
<dbReference type="STRING" id="396588.Tgr7_1006"/>
<dbReference type="KEGG" id="tgr:Tgr7_1006"/>
<dbReference type="eggNOG" id="COG0184">
    <property type="taxonomic scope" value="Bacteria"/>
</dbReference>
<dbReference type="HOGENOM" id="CLU_148518_0_0_6"/>
<dbReference type="OrthoDB" id="9799262at2"/>
<dbReference type="Proteomes" id="UP000002383">
    <property type="component" value="Chromosome"/>
</dbReference>
<dbReference type="GO" id="GO:0022627">
    <property type="term" value="C:cytosolic small ribosomal subunit"/>
    <property type="evidence" value="ECO:0007669"/>
    <property type="project" value="TreeGrafter"/>
</dbReference>
<dbReference type="GO" id="GO:0019843">
    <property type="term" value="F:rRNA binding"/>
    <property type="evidence" value="ECO:0007669"/>
    <property type="project" value="UniProtKB-UniRule"/>
</dbReference>
<dbReference type="GO" id="GO:0003735">
    <property type="term" value="F:structural constituent of ribosome"/>
    <property type="evidence" value="ECO:0007669"/>
    <property type="project" value="InterPro"/>
</dbReference>
<dbReference type="GO" id="GO:0006412">
    <property type="term" value="P:translation"/>
    <property type="evidence" value="ECO:0007669"/>
    <property type="project" value="UniProtKB-UniRule"/>
</dbReference>
<dbReference type="CDD" id="cd00353">
    <property type="entry name" value="Ribosomal_S15p_S13e"/>
    <property type="match status" value="1"/>
</dbReference>
<dbReference type="FunFam" id="1.10.287.10:FF:000002">
    <property type="entry name" value="30S ribosomal protein S15"/>
    <property type="match status" value="1"/>
</dbReference>
<dbReference type="Gene3D" id="6.10.250.3130">
    <property type="match status" value="1"/>
</dbReference>
<dbReference type="Gene3D" id="1.10.287.10">
    <property type="entry name" value="S15/NS1, RNA-binding"/>
    <property type="match status" value="1"/>
</dbReference>
<dbReference type="HAMAP" id="MF_01343_B">
    <property type="entry name" value="Ribosomal_uS15_B"/>
    <property type="match status" value="1"/>
</dbReference>
<dbReference type="InterPro" id="IPR000589">
    <property type="entry name" value="Ribosomal_uS15"/>
</dbReference>
<dbReference type="InterPro" id="IPR005290">
    <property type="entry name" value="Ribosomal_uS15_bac-type"/>
</dbReference>
<dbReference type="InterPro" id="IPR009068">
    <property type="entry name" value="uS15_NS1_RNA-bd_sf"/>
</dbReference>
<dbReference type="NCBIfam" id="TIGR00952">
    <property type="entry name" value="S15_bact"/>
    <property type="match status" value="1"/>
</dbReference>
<dbReference type="PANTHER" id="PTHR23321">
    <property type="entry name" value="RIBOSOMAL PROTEIN S15, BACTERIAL AND ORGANELLAR"/>
    <property type="match status" value="1"/>
</dbReference>
<dbReference type="PANTHER" id="PTHR23321:SF26">
    <property type="entry name" value="SMALL RIBOSOMAL SUBUNIT PROTEIN US15M"/>
    <property type="match status" value="1"/>
</dbReference>
<dbReference type="Pfam" id="PF00312">
    <property type="entry name" value="Ribosomal_S15"/>
    <property type="match status" value="1"/>
</dbReference>
<dbReference type="SMART" id="SM01387">
    <property type="entry name" value="Ribosomal_S15"/>
    <property type="match status" value="1"/>
</dbReference>
<dbReference type="SUPFAM" id="SSF47060">
    <property type="entry name" value="S15/NS1 RNA-binding domain"/>
    <property type="match status" value="1"/>
</dbReference>
<dbReference type="PROSITE" id="PS00362">
    <property type="entry name" value="RIBOSOMAL_S15"/>
    <property type="match status" value="1"/>
</dbReference>
<name>RS15_THISH</name>
<sequence>MSLNAETKAGIVEKYRRDPSDTGSPEVQVALLSARIDHLMGHFASHKKDHHSRRGLLKMVNQRRKLLDYLKSQDQQRYQDLVSSLGLRR</sequence>
<organism>
    <name type="scientific">Thioalkalivibrio sulfidiphilus (strain HL-EbGR7)</name>
    <dbReference type="NCBI Taxonomy" id="396588"/>
    <lineage>
        <taxon>Bacteria</taxon>
        <taxon>Pseudomonadati</taxon>
        <taxon>Pseudomonadota</taxon>
        <taxon>Gammaproteobacteria</taxon>
        <taxon>Chromatiales</taxon>
        <taxon>Ectothiorhodospiraceae</taxon>
        <taxon>Thioalkalivibrio</taxon>
    </lineage>
</organism>
<protein>
    <recommendedName>
        <fullName evidence="1">Small ribosomal subunit protein uS15</fullName>
    </recommendedName>
    <alternativeName>
        <fullName evidence="3">30S ribosomal protein S15</fullName>
    </alternativeName>
</protein>
<comment type="function">
    <text evidence="1">One of the primary rRNA binding proteins, it binds directly to 16S rRNA where it helps nucleate assembly of the platform of the 30S subunit by binding and bridging several RNA helices of the 16S rRNA.</text>
</comment>
<comment type="function">
    <text evidence="1">Forms an intersubunit bridge (bridge B4) with the 23S rRNA of the 50S subunit in the ribosome.</text>
</comment>
<comment type="subunit">
    <text evidence="1">Part of the 30S ribosomal subunit. Forms a bridge to the 50S subunit in the 70S ribosome, contacting the 23S rRNA.</text>
</comment>
<comment type="similarity">
    <text evidence="1">Belongs to the universal ribosomal protein uS15 family.</text>
</comment>
<reference key="1">
    <citation type="journal article" date="2011" name="Stand. Genomic Sci.">
        <title>Complete genome sequence of 'Thioalkalivibrio sulfidophilus' HL-EbGr7.</title>
        <authorList>
            <person name="Muyzer G."/>
            <person name="Sorokin D.Y."/>
            <person name="Mavromatis K."/>
            <person name="Lapidus A."/>
            <person name="Clum A."/>
            <person name="Ivanova N."/>
            <person name="Pati A."/>
            <person name="d'Haeseleer P."/>
            <person name="Woyke T."/>
            <person name="Kyrpides N.C."/>
        </authorList>
    </citation>
    <scope>NUCLEOTIDE SEQUENCE [LARGE SCALE GENOMIC DNA]</scope>
    <source>
        <strain>HL-EbGR7</strain>
    </source>
</reference>
<accession>B8GP05</accession>